<keyword id="KW-0963">Cytoplasm</keyword>
<keyword id="KW-0489">Methyltransferase</keyword>
<keyword id="KW-1185">Reference proteome</keyword>
<keyword id="KW-0698">rRNA processing</keyword>
<keyword id="KW-0949">S-adenosyl-L-methionine</keyword>
<keyword id="KW-0808">Transferase</keyword>
<feature type="chain" id="PRO_0000260562" description="Ribosomal RNA large subunit methyltransferase H">
    <location>
        <begin position="1"/>
        <end position="154"/>
    </location>
</feature>
<feature type="binding site" evidence="1">
    <location>
        <position position="70"/>
    </location>
    <ligand>
        <name>S-adenosyl-L-methionine</name>
        <dbReference type="ChEBI" id="CHEBI:59789"/>
    </ligand>
</feature>
<feature type="binding site" evidence="1">
    <location>
        <position position="102"/>
    </location>
    <ligand>
        <name>S-adenosyl-L-methionine</name>
        <dbReference type="ChEBI" id="CHEBI:59789"/>
    </ligand>
</feature>
<protein>
    <recommendedName>
        <fullName evidence="1">Ribosomal RNA large subunit methyltransferase H</fullName>
        <ecNumber evidence="1">2.1.1.177</ecNumber>
    </recommendedName>
    <alternativeName>
        <fullName evidence="1">23S rRNA (pseudouridine1915-N3)-methyltransferase</fullName>
    </alternativeName>
    <alternativeName>
        <fullName evidence="1">23S rRNA m3Psi1915 methyltransferase</fullName>
    </alternativeName>
    <alternativeName>
        <fullName evidence="1">rRNA (pseudouridine-N3-)-methyltransferase RlmH</fullName>
    </alternativeName>
</protein>
<reference key="1">
    <citation type="journal article" date="2006" name="J. Bacteriol.">
        <title>Comparative genomic evidence for a close relationship between the dimorphic prosthecate bacteria Hyphomonas neptunium and Caulobacter crescentus.</title>
        <authorList>
            <person name="Badger J.H."/>
            <person name="Hoover T.R."/>
            <person name="Brun Y.V."/>
            <person name="Weiner R.M."/>
            <person name="Laub M.T."/>
            <person name="Alexandre G."/>
            <person name="Mrazek J."/>
            <person name="Ren Q."/>
            <person name="Paulsen I.T."/>
            <person name="Nelson K.E."/>
            <person name="Khouri H.M."/>
            <person name="Radune D."/>
            <person name="Sosa J."/>
            <person name="Dodson R.J."/>
            <person name="Sullivan S.A."/>
            <person name="Rosovitz M.J."/>
            <person name="Madupu R."/>
            <person name="Brinkac L.M."/>
            <person name="Durkin A.S."/>
            <person name="Daugherty S.C."/>
            <person name="Kothari S.P."/>
            <person name="Giglio M.G."/>
            <person name="Zhou L."/>
            <person name="Haft D.H."/>
            <person name="Selengut J.D."/>
            <person name="Davidsen T.M."/>
            <person name="Yang Q."/>
            <person name="Zafar N."/>
            <person name="Ward N.L."/>
        </authorList>
    </citation>
    <scope>NUCLEOTIDE SEQUENCE [LARGE SCALE GENOMIC DNA]</scope>
    <source>
        <strain>ATCC 15444</strain>
    </source>
</reference>
<gene>
    <name evidence="1" type="primary">rlmH</name>
    <name type="ordered locus">HNE_0304</name>
</gene>
<sequence>MRLQILAVGRLKDGPERDLTDDYIRRASAMARGLGFKGPEEAEIASGGGMDAEGARLLARIPEGARIIRLDEGGENLTSEAFASRLSRWRDDGERDTCFLIGGAEGYAPDVRAAAPQTLAFGVQTWPHRLVRAMLAEQLYRAMTILAGTPYHKA</sequence>
<name>RLMH_HYPNA</name>
<dbReference type="EC" id="2.1.1.177" evidence="1"/>
<dbReference type="EMBL" id="CP000158">
    <property type="protein sequence ID" value="ABI75655.1"/>
    <property type="molecule type" value="Genomic_DNA"/>
</dbReference>
<dbReference type="RefSeq" id="WP_011645334.1">
    <property type="nucleotide sequence ID" value="NC_008358.1"/>
</dbReference>
<dbReference type="SMR" id="Q0C5F9"/>
<dbReference type="STRING" id="228405.HNE_0304"/>
<dbReference type="KEGG" id="hne:HNE_0304"/>
<dbReference type="eggNOG" id="COG1576">
    <property type="taxonomic scope" value="Bacteria"/>
</dbReference>
<dbReference type="HOGENOM" id="CLU_100552_1_1_5"/>
<dbReference type="Proteomes" id="UP000001959">
    <property type="component" value="Chromosome"/>
</dbReference>
<dbReference type="GO" id="GO:0005737">
    <property type="term" value="C:cytoplasm"/>
    <property type="evidence" value="ECO:0007669"/>
    <property type="project" value="UniProtKB-SubCell"/>
</dbReference>
<dbReference type="GO" id="GO:0070038">
    <property type="term" value="F:rRNA (pseudouridine-N3-)-methyltransferase activity"/>
    <property type="evidence" value="ECO:0007669"/>
    <property type="project" value="UniProtKB-UniRule"/>
</dbReference>
<dbReference type="CDD" id="cd18081">
    <property type="entry name" value="RlmH-like"/>
    <property type="match status" value="1"/>
</dbReference>
<dbReference type="Gene3D" id="3.40.1280.10">
    <property type="match status" value="1"/>
</dbReference>
<dbReference type="HAMAP" id="MF_00658">
    <property type="entry name" value="23SrRNA_methyltr_H"/>
    <property type="match status" value="1"/>
</dbReference>
<dbReference type="InterPro" id="IPR029028">
    <property type="entry name" value="Alpha/beta_knot_MTases"/>
</dbReference>
<dbReference type="InterPro" id="IPR003742">
    <property type="entry name" value="RlmH-like"/>
</dbReference>
<dbReference type="InterPro" id="IPR029026">
    <property type="entry name" value="tRNA_m1G_MTases_N"/>
</dbReference>
<dbReference type="NCBIfam" id="NF000989">
    <property type="entry name" value="PRK00103.2-3"/>
    <property type="match status" value="1"/>
</dbReference>
<dbReference type="PANTHER" id="PTHR33603">
    <property type="entry name" value="METHYLTRANSFERASE"/>
    <property type="match status" value="1"/>
</dbReference>
<dbReference type="PANTHER" id="PTHR33603:SF1">
    <property type="entry name" value="RIBOSOMAL RNA LARGE SUBUNIT METHYLTRANSFERASE H"/>
    <property type="match status" value="1"/>
</dbReference>
<dbReference type="Pfam" id="PF02590">
    <property type="entry name" value="SPOUT_MTase"/>
    <property type="match status" value="1"/>
</dbReference>
<dbReference type="PIRSF" id="PIRSF004505">
    <property type="entry name" value="MT_bac"/>
    <property type="match status" value="1"/>
</dbReference>
<dbReference type="SUPFAM" id="SSF75217">
    <property type="entry name" value="alpha/beta knot"/>
    <property type="match status" value="1"/>
</dbReference>
<proteinExistence type="inferred from homology"/>
<evidence type="ECO:0000255" key="1">
    <source>
        <dbReference type="HAMAP-Rule" id="MF_00658"/>
    </source>
</evidence>
<accession>Q0C5F9</accession>
<comment type="function">
    <text evidence="1">Specifically methylates the pseudouridine at position 1915 (m3Psi1915) in 23S rRNA.</text>
</comment>
<comment type="catalytic activity">
    <reaction evidence="1">
        <text>pseudouridine(1915) in 23S rRNA + S-adenosyl-L-methionine = N(3)-methylpseudouridine(1915) in 23S rRNA + S-adenosyl-L-homocysteine + H(+)</text>
        <dbReference type="Rhea" id="RHEA:42752"/>
        <dbReference type="Rhea" id="RHEA-COMP:10221"/>
        <dbReference type="Rhea" id="RHEA-COMP:10222"/>
        <dbReference type="ChEBI" id="CHEBI:15378"/>
        <dbReference type="ChEBI" id="CHEBI:57856"/>
        <dbReference type="ChEBI" id="CHEBI:59789"/>
        <dbReference type="ChEBI" id="CHEBI:65314"/>
        <dbReference type="ChEBI" id="CHEBI:74486"/>
        <dbReference type="EC" id="2.1.1.177"/>
    </reaction>
</comment>
<comment type="subunit">
    <text evidence="1">Homodimer.</text>
</comment>
<comment type="subcellular location">
    <subcellularLocation>
        <location evidence="1">Cytoplasm</location>
    </subcellularLocation>
</comment>
<comment type="similarity">
    <text evidence="1">Belongs to the RNA methyltransferase RlmH family.</text>
</comment>
<organism>
    <name type="scientific">Hyphomonas neptunium (strain ATCC 15444)</name>
    <dbReference type="NCBI Taxonomy" id="228405"/>
    <lineage>
        <taxon>Bacteria</taxon>
        <taxon>Pseudomonadati</taxon>
        <taxon>Pseudomonadota</taxon>
        <taxon>Alphaproteobacteria</taxon>
        <taxon>Hyphomonadales</taxon>
        <taxon>Hyphomonadaceae</taxon>
        <taxon>Hyphomonas</taxon>
    </lineage>
</organism>